<proteinExistence type="inferred from homology"/>
<organism>
    <name type="scientific">Geobacter sp. (strain M21)</name>
    <dbReference type="NCBI Taxonomy" id="443144"/>
    <lineage>
        <taxon>Bacteria</taxon>
        <taxon>Pseudomonadati</taxon>
        <taxon>Thermodesulfobacteriota</taxon>
        <taxon>Desulfuromonadia</taxon>
        <taxon>Geobacterales</taxon>
        <taxon>Geobacteraceae</taxon>
        <taxon>Geobacter</taxon>
    </lineage>
</organism>
<protein>
    <recommendedName>
        <fullName evidence="1">Large ribosomal subunit protein bL36</fullName>
    </recommendedName>
    <alternativeName>
        <fullName evidence="2">50S ribosomal protein L36</fullName>
    </alternativeName>
</protein>
<name>RL36_GEOSM</name>
<reference key="1">
    <citation type="submission" date="2009-07" db="EMBL/GenBank/DDBJ databases">
        <title>Complete sequence of Geobacter sp. M21.</title>
        <authorList>
            <consortium name="US DOE Joint Genome Institute"/>
            <person name="Lucas S."/>
            <person name="Copeland A."/>
            <person name="Lapidus A."/>
            <person name="Glavina del Rio T."/>
            <person name="Dalin E."/>
            <person name="Tice H."/>
            <person name="Bruce D."/>
            <person name="Goodwin L."/>
            <person name="Pitluck S."/>
            <person name="Saunders E."/>
            <person name="Brettin T."/>
            <person name="Detter J.C."/>
            <person name="Han C."/>
            <person name="Larimer F."/>
            <person name="Land M."/>
            <person name="Hauser L."/>
            <person name="Kyrpides N."/>
            <person name="Ovchinnikova G."/>
            <person name="Lovley D."/>
        </authorList>
    </citation>
    <scope>NUCLEOTIDE SEQUENCE [LARGE SCALE GENOMIC DNA]</scope>
    <source>
        <strain>M21</strain>
    </source>
</reference>
<dbReference type="EMBL" id="CP001661">
    <property type="protein sequence ID" value="ACT19330.1"/>
    <property type="molecule type" value="Genomic_DNA"/>
</dbReference>
<dbReference type="SMR" id="C6E4N4"/>
<dbReference type="STRING" id="443144.GM21_3305"/>
<dbReference type="KEGG" id="gem:GM21_3305"/>
<dbReference type="eggNOG" id="COG0257">
    <property type="taxonomic scope" value="Bacteria"/>
</dbReference>
<dbReference type="HOGENOM" id="CLU_135723_6_2_7"/>
<dbReference type="GO" id="GO:0005737">
    <property type="term" value="C:cytoplasm"/>
    <property type="evidence" value="ECO:0007669"/>
    <property type="project" value="UniProtKB-ARBA"/>
</dbReference>
<dbReference type="GO" id="GO:1990904">
    <property type="term" value="C:ribonucleoprotein complex"/>
    <property type="evidence" value="ECO:0007669"/>
    <property type="project" value="UniProtKB-KW"/>
</dbReference>
<dbReference type="GO" id="GO:0005840">
    <property type="term" value="C:ribosome"/>
    <property type="evidence" value="ECO:0007669"/>
    <property type="project" value="UniProtKB-KW"/>
</dbReference>
<dbReference type="GO" id="GO:0003735">
    <property type="term" value="F:structural constituent of ribosome"/>
    <property type="evidence" value="ECO:0007669"/>
    <property type="project" value="InterPro"/>
</dbReference>
<dbReference type="GO" id="GO:0006412">
    <property type="term" value="P:translation"/>
    <property type="evidence" value="ECO:0007669"/>
    <property type="project" value="UniProtKB-UniRule"/>
</dbReference>
<dbReference type="HAMAP" id="MF_00251">
    <property type="entry name" value="Ribosomal_bL36"/>
    <property type="match status" value="1"/>
</dbReference>
<dbReference type="InterPro" id="IPR000473">
    <property type="entry name" value="Ribosomal_bL36"/>
</dbReference>
<dbReference type="InterPro" id="IPR035977">
    <property type="entry name" value="Ribosomal_bL36_sp"/>
</dbReference>
<dbReference type="NCBIfam" id="TIGR01022">
    <property type="entry name" value="rpmJ_bact"/>
    <property type="match status" value="1"/>
</dbReference>
<dbReference type="PANTHER" id="PTHR42888">
    <property type="entry name" value="50S RIBOSOMAL PROTEIN L36, CHLOROPLASTIC"/>
    <property type="match status" value="1"/>
</dbReference>
<dbReference type="PANTHER" id="PTHR42888:SF1">
    <property type="entry name" value="LARGE RIBOSOMAL SUBUNIT PROTEIN BL36C"/>
    <property type="match status" value="1"/>
</dbReference>
<dbReference type="Pfam" id="PF00444">
    <property type="entry name" value="Ribosomal_L36"/>
    <property type="match status" value="1"/>
</dbReference>
<dbReference type="SUPFAM" id="SSF57840">
    <property type="entry name" value="Ribosomal protein L36"/>
    <property type="match status" value="1"/>
</dbReference>
<dbReference type="PROSITE" id="PS00828">
    <property type="entry name" value="RIBOSOMAL_L36"/>
    <property type="match status" value="1"/>
</dbReference>
<gene>
    <name evidence="1" type="primary">rpmJ</name>
    <name type="ordered locus">GM21_3305</name>
</gene>
<evidence type="ECO:0000255" key="1">
    <source>
        <dbReference type="HAMAP-Rule" id="MF_00251"/>
    </source>
</evidence>
<evidence type="ECO:0000305" key="2"/>
<feature type="chain" id="PRO_1000204552" description="Large ribosomal subunit protein bL36">
    <location>
        <begin position="1"/>
        <end position="37"/>
    </location>
</feature>
<sequence length="37" mass="4236">MKVRASVKKICVKCKIVKRKGIVRVICETPKHSQRQG</sequence>
<comment type="similarity">
    <text evidence="1">Belongs to the bacterial ribosomal protein bL36 family.</text>
</comment>
<accession>C6E4N4</accession>
<keyword id="KW-0687">Ribonucleoprotein</keyword>
<keyword id="KW-0689">Ribosomal protein</keyword>